<sequence length="113" mass="12943">MKITLSKRIGLLAFLLPCALALSTTVHAETNKLVIESGDSAQSRQHAAMEKEQWNDTRNLRQKVNKRTEKEWDKADAAFDNRDKCEQSANINAYWEPNTLRCLDRRTGRVITP</sequence>
<keyword id="KW-1185">Reference proteome</keyword>
<keyword id="KW-0732">Signal</keyword>
<comment type="similarity">
    <text evidence="1">Belongs to the UPF0482 family.</text>
</comment>
<evidence type="ECO:0000255" key="1">
    <source>
        <dbReference type="HAMAP-Rule" id="MF_01581"/>
    </source>
</evidence>
<accession>Q83L09</accession>
<accession>Q7C1I6</accession>
<dbReference type="EMBL" id="AE005674">
    <property type="protein sequence ID" value="AAN43179.1"/>
    <property type="molecule type" value="Genomic_DNA"/>
</dbReference>
<dbReference type="EMBL" id="AE014073">
    <property type="protein sequence ID" value="AAP17071.1"/>
    <property type="molecule type" value="Genomic_DNA"/>
</dbReference>
<dbReference type="RefSeq" id="NP_707472.1">
    <property type="nucleotide sequence ID" value="NC_004337.2"/>
</dbReference>
<dbReference type="RefSeq" id="WP_000705197.1">
    <property type="nucleotide sequence ID" value="NZ_WPGW01000117.1"/>
</dbReference>
<dbReference type="STRING" id="198214.SF1593"/>
<dbReference type="PaxDb" id="198214-SF1593"/>
<dbReference type="GeneID" id="1024782"/>
<dbReference type="KEGG" id="sfl:SF1593"/>
<dbReference type="KEGG" id="sfx:S1720"/>
<dbReference type="PATRIC" id="fig|198214.7.peg.1884"/>
<dbReference type="HOGENOM" id="CLU_167574_0_0_6"/>
<dbReference type="Proteomes" id="UP000001006">
    <property type="component" value="Chromosome"/>
</dbReference>
<dbReference type="Proteomes" id="UP000002673">
    <property type="component" value="Chromosome"/>
</dbReference>
<dbReference type="HAMAP" id="MF_01581">
    <property type="entry name" value="UPF0482"/>
    <property type="match status" value="1"/>
</dbReference>
<dbReference type="InterPro" id="IPR009700">
    <property type="entry name" value="DUF1283"/>
</dbReference>
<dbReference type="NCBIfam" id="NF010180">
    <property type="entry name" value="PRK13659.1"/>
    <property type="match status" value="1"/>
</dbReference>
<dbReference type="Pfam" id="PF06932">
    <property type="entry name" value="DUF1283"/>
    <property type="match status" value="1"/>
</dbReference>
<proteinExistence type="inferred from homology"/>
<organism>
    <name type="scientific">Shigella flexneri</name>
    <dbReference type="NCBI Taxonomy" id="623"/>
    <lineage>
        <taxon>Bacteria</taxon>
        <taxon>Pseudomonadati</taxon>
        <taxon>Pseudomonadota</taxon>
        <taxon>Gammaproteobacteria</taxon>
        <taxon>Enterobacterales</taxon>
        <taxon>Enterobacteriaceae</taxon>
        <taxon>Shigella</taxon>
    </lineage>
</organism>
<feature type="signal peptide" evidence="1">
    <location>
        <begin position="1"/>
        <end position="28"/>
    </location>
</feature>
<feature type="chain" id="PRO_0000300231" description="UPF0482 protein YnfB">
    <location>
        <begin position="29"/>
        <end position="113"/>
    </location>
</feature>
<reference key="1">
    <citation type="journal article" date="2002" name="Nucleic Acids Res.">
        <title>Genome sequence of Shigella flexneri 2a: insights into pathogenicity through comparison with genomes of Escherichia coli K12 and O157.</title>
        <authorList>
            <person name="Jin Q."/>
            <person name="Yuan Z."/>
            <person name="Xu J."/>
            <person name="Wang Y."/>
            <person name="Shen Y."/>
            <person name="Lu W."/>
            <person name="Wang J."/>
            <person name="Liu H."/>
            <person name="Yang J."/>
            <person name="Yang F."/>
            <person name="Zhang X."/>
            <person name="Zhang J."/>
            <person name="Yang G."/>
            <person name="Wu H."/>
            <person name="Qu D."/>
            <person name="Dong J."/>
            <person name="Sun L."/>
            <person name="Xue Y."/>
            <person name="Zhao A."/>
            <person name="Gao Y."/>
            <person name="Zhu J."/>
            <person name="Kan B."/>
            <person name="Ding K."/>
            <person name="Chen S."/>
            <person name="Cheng H."/>
            <person name="Yao Z."/>
            <person name="He B."/>
            <person name="Chen R."/>
            <person name="Ma D."/>
            <person name="Qiang B."/>
            <person name="Wen Y."/>
            <person name="Hou Y."/>
            <person name="Yu J."/>
        </authorList>
    </citation>
    <scope>NUCLEOTIDE SEQUENCE [LARGE SCALE GENOMIC DNA]</scope>
    <source>
        <strain>301 / Serotype 2a</strain>
    </source>
</reference>
<reference key="2">
    <citation type="journal article" date="2003" name="Infect. Immun.">
        <title>Complete genome sequence and comparative genomics of Shigella flexneri serotype 2a strain 2457T.</title>
        <authorList>
            <person name="Wei J."/>
            <person name="Goldberg M.B."/>
            <person name="Burland V."/>
            <person name="Venkatesan M.M."/>
            <person name="Deng W."/>
            <person name="Fournier G."/>
            <person name="Mayhew G.F."/>
            <person name="Plunkett G. III"/>
            <person name="Rose D.J."/>
            <person name="Darling A."/>
            <person name="Mau B."/>
            <person name="Perna N.T."/>
            <person name="Payne S.M."/>
            <person name="Runyen-Janecky L.J."/>
            <person name="Zhou S."/>
            <person name="Schwartz D.C."/>
            <person name="Blattner F.R."/>
        </authorList>
    </citation>
    <scope>NUCLEOTIDE SEQUENCE [LARGE SCALE GENOMIC DNA]</scope>
    <source>
        <strain>ATCC 700930 / 2457T / Serotype 2a</strain>
    </source>
</reference>
<protein>
    <recommendedName>
        <fullName evidence="1">UPF0482 protein YnfB</fullName>
    </recommendedName>
</protein>
<gene>
    <name evidence="1" type="primary">ynfB</name>
    <name type="ordered locus">SF1593</name>
    <name type="ordered locus">S1720</name>
</gene>
<name>YNFB_SHIFL</name>